<keyword id="KW-0687">Ribonucleoprotein</keyword>
<keyword id="KW-0689">Ribosomal protein</keyword>
<keyword id="KW-0694">RNA-binding</keyword>
<keyword id="KW-0699">rRNA-binding</keyword>
<protein>
    <recommendedName>
        <fullName evidence="1">Large ribosomal subunit protein bL9</fullName>
    </recommendedName>
    <alternativeName>
        <fullName evidence="2">50S ribosomal protein L9</fullName>
    </alternativeName>
</protein>
<reference key="1">
    <citation type="submission" date="2007-03" db="EMBL/GenBank/DDBJ databases">
        <title>Complete sequence of chromosome 1 of Burkholderia vietnamiensis G4.</title>
        <authorList>
            <consortium name="US DOE Joint Genome Institute"/>
            <person name="Copeland A."/>
            <person name="Lucas S."/>
            <person name="Lapidus A."/>
            <person name="Barry K."/>
            <person name="Detter J.C."/>
            <person name="Glavina del Rio T."/>
            <person name="Hammon N."/>
            <person name="Israni S."/>
            <person name="Dalin E."/>
            <person name="Tice H."/>
            <person name="Pitluck S."/>
            <person name="Chain P."/>
            <person name="Malfatti S."/>
            <person name="Shin M."/>
            <person name="Vergez L."/>
            <person name="Schmutz J."/>
            <person name="Larimer F."/>
            <person name="Land M."/>
            <person name="Hauser L."/>
            <person name="Kyrpides N."/>
            <person name="Tiedje J."/>
            <person name="Richardson P."/>
        </authorList>
    </citation>
    <scope>NUCLEOTIDE SEQUENCE [LARGE SCALE GENOMIC DNA]</scope>
    <source>
        <strain>G4 / LMG 22486</strain>
    </source>
</reference>
<accession>A4JEU8</accession>
<dbReference type="EMBL" id="CP000614">
    <property type="protein sequence ID" value="ABO54801.1"/>
    <property type="molecule type" value="Genomic_DNA"/>
</dbReference>
<dbReference type="SMR" id="A4JEU8"/>
<dbReference type="KEGG" id="bvi:Bcep1808_1797"/>
<dbReference type="eggNOG" id="COG0359">
    <property type="taxonomic scope" value="Bacteria"/>
</dbReference>
<dbReference type="HOGENOM" id="CLU_078938_4_1_4"/>
<dbReference type="Proteomes" id="UP000002287">
    <property type="component" value="Chromosome 1"/>
</dbReference>
<dbReference type="GO" id="GO:1990904">
    <property type="term" value="C:ribonucleoprotein complex"/>
    <property type="evidence" value="ECO:0007669"/>
    <property type="project" value="UniProtKB-KW"/>
</dbReference>
<dbReference type="GO" id="GO:0005840">
    <property type="term" value="C:ribosome"/>
    <property type="evidence" value="ECO:0007669"/>
    <property type="project" value="UniProtKB-KW"/>
</dbReference>
<dbReference type="GO" id="GO:0019843">
    <property type="term" value="F:rRNA binding"/>
    <property type="evidence" value="ECO:0007669"/>
    <property type="project" value="UniProtKB-UniRule"/>
</dbReference>
<dbReference type="GO" id="GO:0003735">
    <property type="term" value="F:structural constituent of ribosome"/>
    <property type="evidence" value="ECO:0007669"/>
    <property type="project" value="InterPro"/>
</dbReference>
<dbReference type="GO" id="GO:0006412">
    <property type="term" value="P:translation"/>
    <property type="evidence" value="ECO:0007669"/>
    <property type="project" value="UniProtKB-UniRule"/>
</dbReference>
<dbReference type="Gene3D" id="3.10.430.100">
    <property type="entry name" value="Ribosomal protein L9, C-terminal domain"/>
    <property type="match status" value="1"/>
</dbReference>
<dbReference type="Gene3D" id="3.40.5.10">
    <property type="entry name" value="Ribosomal protein L9, N-terminal domain"/>
    <property type="match status" value="1"/>
</dbReference>
<dbReference type="HAMAP" id="MF_00503">
    <property type="entry name" value="Ribosomal_bL9"/>
    <property type="match status" value="1"/>
</dbReference>
<dbReference type="InterPro" id="IPR000244">
    <property type="entry name" value="Ribosomal_bL9"/>
</dbReference>
<dbReference type="InterPro" id="IPR009027">
    <property type="entry name" value="Ribosomal_bL9/RNase_H1_N"/>
</dbReference>
<dbReference type="InterPro" id="IPR020594">
    <property type="entry name" value="Ribosomal_bL9_bac/chp"/>
</dbReference>
<dbReference type="InterPro" id="IPR020069">
    <property type="entry name" value="Ribosomal_bL9_C"/>
</dbReference>
<dbReference type="InterPro" id="IPR036791">
    <property type="entry name" value="Ribosomal_bL9_C_sf"/>
</dbReference>
<dbReference type="InterPro" id="IPR020070">
    <property type="entry name" value="Ribosomal_bL9_N"/>
</dbReference>
<dbReference type="InterPro" id="IPR036935">
    <property type="entry name" value="Ribosomal_bL9_N_sf"/>
</dbReference>
<dbReference type="NCBIfam" id="TIGR00158">
    <property type="entry name" value="L9"/>
    <property type="match status" value="1"/>
</dbReference>
<dbReference type="PANTHER" id="PTHR21368">
    <property type="entry name" value="50S RIBOSOMAL PROTEIN L9"/>
    <property type="match status" value="1"/>
</dbReference>
<dbReference type="Pfam" id="PF03948">
    <property type="entry name" value="Ribosomal_L9_C"/>
    <property type="match status" value="1"/>
</dbReference>
<dbReference type="Pfam" id="PF01281">
    <property type="entry name" value="Ribosomal_L9_N"/>
    <property type="match status" value="1"/>
</dbReference>
<dbReference type="SUPFAM" id="SSF55658">
    <property type="entry name" value="L9 N-domain-like"/>
    <property type="match status" value="1"/>
</dbReference>
<dbReference type="SUPFAM" id="SSF55653">
    <property type="entry name" value="Ribosomal protein L9 C-domain"/>
    <property type="match status" value="1"/>
</dbReference>
<dbReference type="PROSITE" id="PS00651">
    <property type="entry name" value="RIBOSOMAL_L9"/>
    <property type="match status" value="1"/>
</dbReference>
<proteinExistence type="inferred from homology"/>
<organism>
    <name type="scientific">Burkholderia vietnamiensis (strain G4 / LMG 22486)</name>
    <name type="common">Burkholderia cepacia (strain R1808)</name>
    <dbReference type="NCBI Taxonomy" id="269482"/>
    <lineage>
        <taxon>Bacteria</taxon>
        <taxon>Pseudomonadati</taxon>
        <taxon>Pseudomonadota</taxon>
        <taxon>Betaproteobacteria</taxon>
        <taxon>Burkholderiales</taxon>
        <taxon>Burkholderiaceae</taxon>
        <taxon>Burkholderia</taxon>
        <taxon>Burkholderia cepacia complex</taxon>
    </lineage>
</organism>
<sequence length="150" mass="16313">MQIILLEKVANLGNLGDIVKVKDGYARNFLIPNRKARRATKEAIAEFEVRRAELEKIAAEKLAASQAVGEKLNGQAFEVTQKSGVDGRLFGSVTNGDVAELLKKAGFEVEKLQVRMPEGPLKMIGEHVVQVALHTDVVVDVTINVIGDHA</sequence>
<feature type="chain" id="PRO_1000014756" description="Large ribosomal subunit protein bL9">
    <location>
        <begin position="1"/>
        <end position="150"/>
    </location>
</feature>
<gene>
    <name evidence="1" type="primary">rplI</name>
    <name type="ordered locus">Bcep1808_1797</name>
</gene>
<comment type="function">
    <text evidence="1">Binds to the 23S rRNA.</text>
</comment>
<comment type="similarity">
    <text evidence="1">Belongs to the bacterial ribosomal protein bL9 family.</text>
</comment>
<name>RL9_BURVG</name>
<evidence type="ECO:0000255" key="1">
    <source>
        <dbReference type="HAMAP-Rule" id="MF_00503"/>
    </source>
</evidence>
<evidence type="ECO:0000305" key="2"/>